<organism>
    <name type="scientific">Lachnoclostridium phytofermentans (strain ATCC 700394 / DSM 18823 / ISDg)</name>
    <name type="common">Clostridium phytofermentans</name>
    <dbReference type="NCBI Taxonomy" id="357809"/>
    <lineage>
        <taxon>Bacteria</taxon>
        <taxon>Bacillati</taxon>
        <taxon>Bacillota</taxon>
        <taxon>Clostridia</taxon>
        <taxon>Lachnospirales</taxon>
        <taxon>Lachnospiraceae</taxon>
    </lineage>
</organism>
<dbReference type="EMBL" id="CP000885">
    <property type="protein sequence ID" value="ABX42178.1"/>
    <property type="molecule type" value="Genomic_DNA"/>
</dbReference>
<dbReference type="RefSeq" id="WP_012199832.1">
    <property type="nucleotide sequence ID" value="NC_010001.1"/>
</dbReference>
<dbReference type="SMR" id="A9KSE6"/>
<dbReference type="STRING" id="357809.Cphy_1809"/>
<dbReference type="KEGG" id="cpy:Cphy_1809"/>
<dbReference type="eggNOG" id="COG1825">
    <property type="taxonomic scope" value="Bacteria"/>
</dbReference>
<dbReference type="HOGENOM" id="CLU_075939_2_2_9"/>
<dbReference type="OrthoDB" id="9790002at2"/>
<dbReference type="Proteomes" id="UP000000370">
    <property type="component" value="Chromosome"/>
</dbReference>
<dbReference type="GO" id="GO:0022625">
    <property type="term" value="C:cytosolic large ribosomal subunit"/>
    <property type="evidence" value="ECO:0007669"/>
    <property type="project" value="TreeGrafter"/>
</dbReference>
<dbReference type="GO" id="GO:0008097">
    <property type="term" value="F:5S rRNA binding"/>
    <property type="evidence" value="ECO:0007669"/>
    <property type="project" value="InterPro"/>
</dbReference>
<dbReference type="GO" id="GO:0003735">
    <property type="term" value="F:structural constituent of ribosome"/>
    <property type="evidence" value="ECO:0007669"/>
    <property type="project" value="InterPro"/>
</dbReference>
<dbReference type="GO" id="GO:0006412">
    <property type="term" value="P:translation"/>
    <property type="evidence" value="ECO:0007669"/>
    <property type="project" value="UniProtKB-UniRule"/>
</dbReference>
<dbReference type="CDD" id="cd00495">
    <property type="entry name" value="Ribosomal_L25_TL5_CTC"/>
    <property type="match status" value="1"/>
</dbReference>
<dbReference type="Gene3D" id="2.170.120.20">
    <property type="entry name" value="Ribosomal protein L25, beta domain"/>
    <property type="match status" value="1"/>
</dbReference>
<dbReference type="Gene3D" id="2.40.240.10">
    <property type="entry name" value="Ribosomal Protein L25, Chain P"/>
    <property type="match status" value="1"/>
</dbReference>
<dbReference type="HAMAP" id="MF_01334">
    <property type="entry name" value="Ribosomal_bL25_CTC"/>
    <property type="match status" value="1"/>
</dbReference>
<dbReference type="InterPro" id="IPR020056">
    <property type="entry name" value="Rbsml_bL25/Gln-tRNA_synth_N"/>
</dbReference>
<dbReference type="InterPro" id="IPR011035">
    <property type="entry name" value="Ribosomal_bL25/Gln-tRNA_synth"/>
</dbReference>
<dbReference type="InterPro" id="IPR020057">
    <property type="entry name" value="Ribosomal_bL25_b-dom"/>
</dbReference>
<dbReference type="InterPro" id="IPR037121">
    <property type="entry name" value="Ribosomal_bL25_C"/>
</dbReference>
<dbReference type="InterPro" id="IPR001021">
    <property type="entry name" value="Ribosomal_bL25_long"/>
</dbReference>
<dbReference type="InterPro" id="IPR029751">
    <property type="entry name" value="Ribosomal_L25_dom"/>
</dbReference>
<dbReference type="InterPro" id="IPR020930">
    <property type="entry name" value="Ribosomal_uL5_bac-type"/>
</dbReference>
<dbReference type="NCBIfam" id="TIGR00731">
    <property type="entry name" value="bL25_bact_ctc"/>
    <property type="match status" value="1"/>
</dbReference>
<dbReference type="PANTHER" id="PTHR33284">
    <property type="entry name" value="RIBOSOMAL PROTEIN L25/GLN-TRNA SYNTHETASE, ANTI-CODON-BINDING DOMAIN-CONTAINING PROTEIN"/>
    <property type="match status" value="1"/>
</dbReference>
<dbReference type="PANTHER" id="PTHR33284:SF1">
    <property type="entry name" value="RIBOSOMAL PROTEIN L25_GLN-TRNA SYNTHETASE, ANTI-CODON-BINDING DOMAIN-CONTAINING PROTEIN"/>
    <property type="match status" value="1"/>
</dbReference>
<dbReference type="Pfam" id="PF01386">
    <property type="entry name" value="Ribosomal_L25p"/>
    <property type="match status" value="1"/>
</dbReference>
<dbReference type="Pfam" id="PF14693">
    <property type="entry name" value="Ribosomal_TL5_C"/>
    <property type="match status" value="1"/>
</dbReference>
<dbReference type="SUPFAM" id="SSF50715">
    <property type="entry name" value="Ribosomal protein L25-like"/>
    <property type="match status" value="1"/>
</dbReference>
<sequence>MQETALLNMVPRTSTSKGANKLLRNNGYLPGNIFGKGMESISIAVKKDEFKKSIKEYGRNAVFKLVDTNNKEYTVMTKEITVAPLINEISHLNFQLVSLSEAIKQEVAFKIIGTEFLESKRLLLNSHVDSVPVSGLPHDIPHELEIDVSSMNSGDSLLFKDIKLPEGITSDVDPELKIITVKGLKRQEVAASE</sequence>
<keyword id="KW-1185">Reference proteome</keyword>
<keyword id="KW-0687">Ribonucleoprotein</keyword>
<keyword id="KW-0689">Ribosomal protein</keyword>
<keyword id="KW-0694">RNA-binding</keyword>
<keyword id="KW-0699">rRNA-binding</keyword>
<proteinExistence type="inferred from homology"/>
<feature type="chain" id="PRO_1000086621" description="Large ribosomal subunit protein bL25">
    <location>
        <begin position="1"/>
        <end position="193"/>
    </location>
</feature>
<gene>
    <name evidence="1" type="primary">rplY</name>
    <name evidence="1" type="synonym">ctc</name>
    <name type="ordered locus">Cphy_1809</name>
</gene>
<accession>A9KSE6</accession>
<protein>
    <recommendedName>
        <fullName evidence="1">Large ribosomal subunit protein bL25</fullName>
    </recommendedName>
    <alternativeName>
        <fullName evidence="2">50S ribosomal protein L25</fullName>
    </alternativeName>
    <alternativeName>
        <fullName evidence="1">General stress protein CTC</fullName>
    </alternativeName>
</protein>
<evidence type="ECO:0000255" key="1">
    <source>
        <dbReference type="HAMAP-Rule" id="MF_01334"/>
    </source>
</evidence>
<evidence type="ECO:0000305" key="2"/>
<reference key="1">
    <citation type="submission" date="2007-11" db="EMBL/GenBank/DDBJ databases">
        <title>Complete genome sequence of Clostridium phytofermentans ISDg.</title>
        <authorList>
            <person name="Leschine S.B."/>
            <person name="Warnick T.A."/>
            <person name="Blanchard J.L."/>
            <person name="Schnell D.J."/>
            <person name="Petit E.L."/>
            <person name="LaTouf W.G."/>
            <person name="Copeland A."/>
            <person name="Lucas S."/>
            <person name="Lapidus A."/>
            <person name="Barry K."/>
            <person name="Glavina del Rio T."/>
            <person name="Dalin E."/>
            <person name="Tice H."/>
            <person name="Pitluck S."/>
            <person name="Kiss H."/>
            <person name="Brettin T."/>
            <person name="Bruce D."/>
            <person name="Detter J.C."/>
            <person name="Han C."/>
            <person name="Kuske C."/>
            <person name="Schmutz J."/>
            <person name="Larimer F."/>
            <person name="Land M."/>
            <person name="Hauser L."/>
            <person name="Kyrpides N."/>
            <person name="Kim E.A."/>
            <person name="Richardson P."/>
        </authorList>
    </citation>
    <scope>NUCLEOTIDE SEQUENCE [LARGE SCALE GENOMIC DNA]</scope>
    <source>
        <strain>ATCC 700394 / DSM 18823 / ISDg</strain>
    </source>
</reference>
<name>RL25_LACP7</name>
<comment type="function">
    <text evidence="1">This is one of the proteins that binds to the 5S RNA in the ribosome where it forms part of the central protuberance.</text>
</comment>
<comment type="subunit">
    <text evidence="1">Part of the 50S ribosomal subunit; part of the 5S rRNA/L5/L18/L25 subcomplex. Contacts the 5S rRNA. Binds to the 5S rRNA independently of L5 and L18.</text>
</comment>
<comment type="similarity">
    <text evidence="1">Belongs to the bacterial ribosomal protein bL25 family. CTC subfamily.</text>
</comment>